<evidence type="ECO:0000255" key="1"/>
<evidence type="ECO:0000305" key="2"/>
<accession>O07940</accession>
<accession>Q796Q8</accession>
<name>YISQ_BACSU</name>
<gene>
    <name type="primary">yisQ</name>
    <name type="synonym">yucE</name>
    <name type="ordered locus">BSU10820</name>
</gene>
<protein>
    <recommendedName>
        <fullName>Uncharacterized transporter YisQ</fullName>
    </recommendedName>
</protein>
<proteinExistence type="inferred from homology"/>
<dbReference type="EMBL" id="Y09476">
    <property type="protein sequence ID" value="CAA70645.1"/>
    <property type="molecule type" value="Genomic_DNA"/>
</dbReference>
<dbReference type="EMBL" id="Z93940">
    <property type="protein sequence ID" value="CAB07959.1"/>
    <property type="molecule type" value="Genomic_DNA"/>
</dbReference>
<dbReference type="EMBL" id="AL009126">
    <property type="protein sequence ID" value="CAB12921.1"/>
    <property type="molecule type" value="Genomic_DNA"/>
</dbReference>
<dbReference type="PIR" id="H69837">
    <property type="entry name" value="H69837"/>
</dbReference>
<dbReference type="RefSeq" id="NP_388962.1">
    <property type="nucleotide sequence ID" value="NC_000964.3"/>
</dbReference>
<dbReference type="RefSeq" id="WP_003233074.1">
    <property type="nucleotide sequence ID" value="NZ_OZ025638.1"/>
</dbReference>
<dbReference type="SMR" id="O07940"/>
<dbReference type="FunCoup" id="O07940">
    <property type="interactions" value="77"/>
</dbReference>
<dbReference type="STRING" id="224308.BSU10820"/>
<dbReference type="PaxDb" id="224308-BSU10820"/>
<dbReference type="DNASU" id="939335"/>
<dbReference type="EnsemblBacteria" id="CAB12921">
    <property type="protein sequence ID" value="CAB12921"/>
    <property type="gene ID" value="BSU_10820"/>
</dbReference>
<dbReference type="GeneID" id="939335"/>
<dbReference type="KEGG" id="bsu:BSU10820"/>
<dbReference type="PATRIC" id="fig|224308.179.peg.1163"/>
<dbReference type="eggNOG" id="COG0534">
    <property type="taxonomic scope" value="Bacteria"/>
</dbReference>
<dbReference type="InParanoid" id="O07940"/>
<dbReference type="OrthoDB" id="9806302at2"/>
<dbReference type="PhylomeDB" id="O07940"/>
<dbReference type="BioCyc" id="BSUB:BSU10820-MONOMER"/>
<dbReference type="Proteomes" id="UP000001570">
    <property type="component" value="Chromosome"/>
</dbReference>
<dbReference type="GO" id="GO:0005886">
    <property type="term" value="C:plasma membrane"/>
    <property type="evidence" value="ECO:0007669"/>
    <property type="project" value="UniProtKB-SubCell"/>
</dbReference>
<dbReference type="GO" id="GO:0015297">
    <property type="term" value="F:antiporter activity"/>
    <property type="evidence" value="ECO:0007669"/>
    <property type="project" value="InterPro"/>
</dbReference>
<dbReference type="GO" id="GO:0042910">
    <property type="term" value="F:xenobiotic transmembrane transporter activity"/>
    <property type="evidence" value="ECO:0007669"/>
    <property type="project" value="InterPro"/>
</dbReference>
<dbReference type="CDD" id="cd13134">
    <property type="entry name" value="MATE_like_8"/>
    <property type="match status" value="1"/>
</dbReference>
<dbReference type="InterPro" id="IPR002528">
    <property type="entry name" value="MATE_fam"/>
</dbReference>
<dbReference type="InterPro" id="IPR048279">
    <property type="entry name" value="MdtK-like"/>
</dbReference>
<dbReference type="InterPro" id="IPR047135">
    <property type="entry name" value="YsiQ"/>
</dbReference>
<dbReference type="NCBIfam" id="TIGR00797">
    <property type="entry name" value="matE"/>
    <property type="match status" value="1"/>
</dbReference>
<dbReference type="PANTHER" id="PTHR42925">
    <property type="entry name" value="MULTIDRUG AND TOXIN EFFLUX PROTEIN MATE FAMILY"/>
    <property type="match status" value="1"/>
</dbReference>
<dbReference type="PANTHER" id="PTHR42925:SF1">
    <property type="entry name" value="VIRULENCE FACTOR MVIN"/>
    <property type="match status" value="1"/>
</dbReference>
<dbReference type="Pfam" id="PF01554">
    <property type="entry name" value="MatE"/>
    <property type="match status" value="2"/>
</dbReference>
<dbReference type="PIRSF" id="PIRSF006603">
    <property type="entry name" value="DinF"/>
    <property type="match status" value="1"/>
</dbReference>
<comment type="subcellular location">
    <subcellularLocation>
        <location evidence="2">Cell membrane</location>
        <topology evidence="2">Multi-pass membrane protein</topology>
    </subcellularLocation>
</comment>
<comment type="similarity">
    <text evidence="2">Belongs to the multi antimicrobial extrusion (MATE) (TC 2.A.66.1) family.</text>
</comment>
<keyword id="KW-1003">Cell membrane</keyword>
<keyword id="KW-0472">Membrane</keyword>
<keyword id="KW-1185">Reference proteome</keyword>
<keyword id="KW-0812">Transmembrane</keyword>
<keyword id="KW-1133">Transmembrane helix</keyword>
<keyword id="KW-0813">Transport</keyword>
<feature type="chain" id="PRO_0000360055" description="Uncharacterized transporter YisQ">
    <location>
        <begin position="1"/>
        <end position="455"/>
    </location>
</feature>
<feature type="transmembrane region" description="Helical" evidence="1">
    <location>
        <begin position="19"/>
        <end position="39"/>
    </location>
</feature>
<feature type="transmembrane region" description="Helical" evidence="1">
    <location>
        <begin position="63"/>
        <end position="83"/>
    </location>
</feature>
<feature type="transmembrane region" description="Helical" evidence="1">
    <location>
        <begin position="106"/>
        <end position="126"/>
    </location>
</feature>
<feature type="transmembrane region" description="Helical" evidence="1">
    <location>
        <begin position="140"/>
        <end position="160"/>
    </location>
</feature>
<feature type="transmembrane region" description="Helical" evidence="1">
    <location>
        <begin position="173"/>
        <end position="195"/>
    </location>
</feature>
<feature type="transmembrane region" description="Helical" evidence="1">
    <location>
        <begin position="200"/>
        <end position="222"/>
    </location>
</feature>
<feature type="transmembrane region" description="Helical" evidence="1">
    <location>
        <begin position="265"/>
        <end position="285"/>
    </location>
</feature>
<feature type="transmembrane region" description="Helical" evidence="1">
    <location>
        <begin position="288"/>
        <end position="308"/>
    </location>
</feature>
<feature type="transmembrane region" description="Helical" evidence="1">
    <location>
        <begin position="324"/>
        <end position="344"/>
    </location>
</feature>
<feature type="transmembrane region" description="Helical" evidence="1">
    <location>
        <begin position="348"/>
        <end position="368"/>
    </location>
</feature>
<feature type="transmembrane region" description="Helical" evidence="1">
    <location>
        <begin position="388"/>
        <end position="408"/>
    </location>
</feature>
<feature type="transmembrane region" description="Helical" evidence="1">
    <location>
        <begin position="410"/>
        <end position="430"/>
    </location>
</feature>
<reference key="1">
    <citation type="journal article" date="1997" name="Microbiology">
        <title>A Bacillus subtilis chromosome segment at the 100 degrees to 102 degrees position encoding 11 membrane proteins.</title>
        <authorList>
            <person name="Roche B."/>
            <person name="Autret S."/>
            <person name="Levine A."/>
            <person name="Vannier F."/>
            <person name="Medina N."/>
            <person name="Seror S.J."/>
        </authorList>
    </citation>
    <scope>NUCLEOTIDE SEQUENCE [GENOMIC DNA]</scope>
    <source>
        <strain>168</strain>
    </source>
</reference>
<reference key="2">
    <citation type="submission" date="1997-04" db="EMBL/GenBank/DDBJ databases">
        <title>Bacillus subtilis genome project, DNA sequence from yucA to yucH.</title>
        <authorList>
            <person name="Oudega B."/>
            <person name="Koningstein G."/>
            <person name="Duesterhoeft A."/>
        </authorList>
    </citation>
    <scope>NUCLEOTIDE SEQUENCE [GENOMIC DNA]</scope>
    <source>
        <strain>168</strain>
    </source>
</reference>
<reference key="3">
    <citation type="journal article" date="1997" name="Nature">
        <title>The complete genome sequence of the Gram-positive bacterium Bacillus subtilis.</title>
        <authorList>
            <person name="Kunst F."/>
            <person name="Ogasawara N."/>
            <person name="Moszer I."/>
            <person name="Albertini A.M."/>
            <person name="Alloni G."/>
            <person name="Azevedo V."/>
            <person name="Bertero M.G."/>
            <person name="Bessieres P."/>
            <person name="Bolotin A."/>
            <person name="Borchert S."/>
            <person name="Borriss R."/>
            <person name="Boursier L."/>
            <person name="Brans A."/>
            <person name="Braun M."/>
            <person name="Brignell S.C."/>
            <person name="Bron S."/>
            <person name="Brouillet S."/>
            <person name="Bruschi C.V."/>
            <person name="Caldwell B."/>
            <person name="Capuano V."/>
            <person name="Carter N.M."/>
            <person name="Choi S.-K."/>
            <person name="Codani J.-J."/>
            <person name="Connerton I.F."/>
            <person name="Cummings N.J."/>
            <person name="Daniel R.A."/>
            <person name="Denizot F."/>
            <person name="Devine K.M."/>
            <person name="Duesterhoeft A."/>
            <person name="Ehrlich S.D."/>
            <person name="Emmerson P.T."/>
            <person name="Entian K.-D."/>
            <person name="Errington J."/>
            <person name="Fabret C."/>
            <person name="Ferrari E."/>
            <person name="Foulger D."/>
            <person name="Fritz C."/>
            <person name="Fujita M."/>
            <person name="Fujita Y."/>
            <person name="Fuma S."/>
            <person name="Galizzi A."/>
            <person name="Galleron N."/>
            <person name="Ghim S.-Y."/>
            <person name="Glaser P."/>
            <person name="Goffeau A."/>
            <person name="Golightly E.J."/>
            <person name="Grandi G."/>
            <person name="Guiseppi G."/>
            <person name="Guy B.J."/>
            <person name="Haga K."/>
            <person name="Haiech J."/>
            <person name="Harwood C.R."/>
            <person name="Henaut A."/>
            <person name="Hilbert H."/>
            <person name="Holsappel S."/>
            <person name="Hosono S."/>
            <person name="Hullo M.-F."/>
            <person name="Itaya M."/>
            <person name="Jones L.-M."/>
            <person name="Joris B."/>
            <person name="Karamata D."/>
            <person name="Kasahara Y."/>
            <person name="Klaerr-Blanchard M."/>
            <person name="Klein C."/>
            <person name="Kobayashi Y."/>
            <person name="Koetter P."/>
            <person name="Koningstein G."/>
            <person name="Krogh S."/>
            <person name="Kumano M."/>
            <person name="Kurita K."/>
            <person name="Lapidus A."/>
            <person name="Lardinois S."/>
            <person name="Lauber J."/>
            <person name="Lazarevic V."/>
            <person name="Lee S.-M."/>
            <person name="Levine A."/>
            <person name="Liu H."/>
            <person name="Masuda S."/>
            <person name="Mauel C."/>
            <person name="Medigue C."/>
            <person name="Medina N."/>
            <person name="Mellado R.P."/>
            <person name="Mizuno M."/>
            <person name="Moestl D."/>
            <person name="Nakai S."/>
            <person name="Noback M."/>
            <person name="Noone D."/>
            <person name="O'Reilly M."/>
            <person name="Ogawa K."/>
            <person name="Ogiwara A."/>
            <person name="Oudega B."/>
            <person name="Park S.-H."/>
            <person name="Parro V."/>
            <person name="Pohl T.M."/>
            <person name="Portetelle D."/>
            <person name="Porwollik S."/>
            <person name="Prescott A.M."/>
            <person name="Presecan E."/>
            <person name="Pujic P."/>
            <person name="Purnelle B."/>
            <person name="Rapoport G."/>
            <person name="Rey M."/>
            <person name="Reynolds S."/>
            <person name="Rieger M."/>
            <person name="Rivolta C."/>
            <person name="Rocha E."/>
            <person name="Roche B."/>
            <person name="Rose M."/>
            <person name="Sadaie Y."/>
            <person name="Sato T."/>
            <person name="Scanlan E."/>
            <person name="Schleich S."/>
            <person name="Schroeter R."/>
            <person name="Scoffone F."/>
            <person name="Sekiguchi J."/>
            <person name="Sekowska A."/>
            <person name="Seror S.J."/>
            <person name="Serror P."/>
            <person name="Shin B.-S."/>
            <person name="Soldo B."/>
            <person name="Sorokin A."/>
            <person name="Tacconi E."/>
            <person name="Takagi T."/>
            <person name="Takahashi H."/>
            <person name="Takemaru K."/>
            <person name="Takeuchi M."/>
            <person name="Tamakoshi A."/>
            <person name="Tanaka T."/>
            <person name="Terpstra P."/>
            <person name="Tognoni A."/>
            <person name="Tosato V."/>
            <person name="Uchiyama S."/>
            <person name="Vandenbol M."/>
            <person name="Vannier F."/>
            <person name="Vassarotti A."/>
            <person name="Viari A."/>
            <person name="Wambutt R."/>
            <person name="Wedler E."/>
            <person name="Wedler H."/>
            <person name="Weitzenegger T."/>
            <person name="Winters P."/>
            <person name="Wipat A."/>
            <person name="Yamamoto H."/>
            <person name="Yamane K."/>
            <person name="Yasumoto K."/>
            <person name="Yata K."/>
            <person name="Yoshida K."/>
            <person name="Yoshikawa H.-F."/>
            <person name="Zumstein E."/>
            <person name="Yoshikawa H."/>
            <person name="Danchin A."/>
        </authorList>
    </citation>
    <scope>NUCLEOTIDE SEQUENCE [LARGE SCALE GENOMIC DNA]</scope>
    <source>
        <strain>168</strain>
    </source>
</reference>
<organism>
    <name type="scientific">Bacillus subtilis (strain 168)</name>
    <dbReference type="NCBI Taxonomy" id="224308"/>
    <lineage>
        <taxon>Bacteria</taxon>
        <taxon>Bacillati</taxon>
        <taxon>Bacillota</taxon>
        <taxon>Bacilli</taxon>
        <taxon>Bacillales</taxon>
        <taxon>Bacillaceae</taxon>
        <taxon>Bacillus</taxon>
    </lineage>
</organism>
<sequence>MKQAVFKSTALKKPADKTFSLFSLTWPIFIEVSLYMFMGNADTLMLSQYSDNSVAAVGVSNQILNLIIVMFSFIATGTTVIISQFLGSRQKKEAMEVAYVSIGANFFISLAISAVVFFAAVPLLHMMGLSDALMPDAKVFLQVVGGLSFIQALIMTFSAILKSYGYTKDTMFVTIGMNILNIAGNFVVIFGLFGFPVLGVAGVAMSTSIARVIGLIAMIVIVNKRIQLKMSLKKVFHMHKEHLRKLLKIGIPSAGEQLSYNLSQMIVTYFIAIMGAQALTTKVYTQNITMFILLFGTAISQGTQILIGRYIGGKQFDAAYERCMKSLYWALGIAAATSVLMTIFSKDLIGLFTQSPDIIATASLLIAMTIILEPGRSFNVIIINSLRAAGDAKFPVYMAMISMWGIGLPLAYLFGIHLGFGLAGIWISFIADEWVRGILMYRRWRSRIWIQKGMA</sequence>